<reference key="1">
    <citation type="submission" date="2006-10" db="EMBL/GenBank/DDBJ databases">
        <authorList>
            <consortium name="Sanger Xenopus tropicalis EST/cDNA project"/>
        </authorList>
    </citation>
    <scope>NUCLEOTIDE SEQUENCE [LARGE SCALE MRNA]</scope>
    <source>
        <tissue>Egg</tissue>
    </source>
</reference>
<reference key="2">
    <citation type="submission" date="2003-12" db="EMBL/GenBank/DDBJ databases">
        <authorList>
            <consortium name="NIH - Xenopus Gene Collection (XGC) project"/>
        </authorList>
    </citation>
    <scope>NUCLEOTIDE SEQUENCE [LARGE SCALE MRNA]</scope>
    <source>
        <tissue>Embryo</tissue>
    </source>
</reference>
<gene>
    <name type="primary">slc30a7</name>
    <name type="ORF">TEgg072f03.1</name>
</gene>
<sequence>MLPLSIKDDEYKPPKFNLVRKVSGWIRSIFSDTTSRNLFCFLCLNLSFAFVELFYGIWSNSLGLISDSFHMFFDCTALLAGLAASVISRWKTNEAFSYGYVRAEVLAGFVNGLFLIFTAFFIFSEGIERALDTPEVHHERLLPVSILGFLVNLIGIFVFQHGGGHGHSHESGHGHSHSLFNGSLSHGHSHSHGGSHGHSHGGGHGHSHSHGEGHGHSHDQSHKHGHGYGSSCHDEPPEEHTGSSKQILEGVFLHIVADALGSVGVIISTILMQRYGLMIADPICSMLIALLIFVSVIPLLKQSIGILMQRTPPSLDHVLPQCYQRVQQLQGVYHLQEPHFWTLCTDVYIGTLKLVIGPEADARWILSQTHNIFTQAGVRQLYVQIDMAAM</sequence>
<accession>Q6P3N9</accession>
<organism>
    <name type="scientific">Xenopus tropicalis</name>
    <name type="common">Western clawed frog</name>
    <name type="synonym">Silurana tropicalis</name>
    <dbReference type="NCBI Taxonomy" id="8364"/>
    <lineage>
        <taxon>Eukaryota</taxon>
        <taxon>Metazoa</taxon>
        <taxon>Chordata</taxon>
        <taxon>Craniata</taxon>
        <taxon>Vertebrata</taxon>
        <taxon>Euteleostomi</taxon>
        <taxon>Amphibia</taxon>
        <taxon>Batrachia</taxon>
        <taxon>Anura</taxon>
        <taxon>Pipoidea</taxon>
        <taxon>Pipidae</taxon>
        <taxon>Xenopodinae</taxon>
        <taxon>Xenopus</taxon>
        <taxon>Silurana</taxon>
    </lineage>
</organism>
<feature type="chain" id="PRO_0000314306" description="Zinc transporter 7">
    <location>
        <begin position="1"/>
        <end position="390"/>
    </location>
</feature>
<feature type="topological domain" description="Cytoplasmic" evidence="6">
    <location>
        <begin position="1"/>
        <end position="37"/>
    </location>
</feature>
<feature type="transmembrane region" description="Helical" evidence="4">
    <location>
        <begin position="38"/>
        <end position="58"/>
    </location>
</feature>
<feature type="topological domain" description="Lumenal" evidence="6">
    <location>
        <begin position="59"/>
        <end position="67"/>
    </location>
</feature>
<feature type="transmembrane region" description="Helical" evidence="4">
    <location>
        <begin position="68"/>
        <end position="88"/>
    </location>
</feature>
<feature type="topological domain" description="Cytoplasmic" evidence="6">
    <location>
        <begin position="89"/>
        <end position="102"/>
    </location>
</feature>
<feature type="transmembrane region" description="Helical" evidence="4">
    <location>
        <begin position="103"/>
        <end position="123"/>
    </location>
</feature>
<feature type="topological domain" description="Lumenal" evidence="6">
    <location>
        <begin position="124"/>
        <end position="140"/>
    </location>
</feature>
<feature type="transmembrane region" description="Helical" evidence="4">
    <location>
        <begin position="141"/>
        <end position="161"/>
    </location>
</feature>
<feature type="topological domain" description="Cytoplasmic" evidence="6">
    <location>
        <begin position="162"/>
        <end position="250"/>
    </location>
</feature>
<feature type="transmembrane region" description="Helical" evidence="4">
    <location>
        <begin position="251"/>
        <end position="271"/>
    </location>
</feature>
<feature type="topological domain" description="Lumenal" evidence="6">
    <location>
        <begin position="272"/>
        <end position="276"/>
    </location>
</feature>
<feature type="transmembrane region" description="Helical" evidence="4">
    <location>
        <begin position="277"/>
        <end position="297"/>
    </location>
</feature>
<feature type="topological domain" description="Cytoplasmic" evidence="6">
    <location>
        <begin position="298"/>
        <end position="390"/>
    </location>
</feature>
<feature type="region of interest" description="His-rich loop">
    <location>
        <begin position="161"/>
        <end position="226"/>
    </location>
</feature>
<feature type="region of interest" description="Disordered" evidence="5">
    <location>
        <begin position="167"/>
        <end position="243"/>
    </location>
</feature>
<feature type="compositionally biased region" description="Low complexity" evidence="5">
    <location>
        <begin position="177"/>
        <end position="186"/>
    </location>
</feature>
<feature type="compositionally biased region" description="Basic residues" evidence="5">
    <location>
        <begin position="187"/>
        <end position="208"/>
    </location>
</feature>
<feature type="compositionally biased region" description="Basic and acidic residues" evidence="5">
    <location>
        <begin position="209"/>
        <end position="222"/>
    </location>
</feature>
<feature type="compositionally biased region" description="Basic and acidic residues" evidence="5">
    <location>
        <begin position="232"/>
        <end position="242"/>
    </location>
</feature>
<protein>
    <recommendedName>
        <fullName evidence="6">Zinc transporter 7</fullName>
    </recommendedName>
    <alternativeName>
        <fullName>Solute carrier family 30 member 7</fullName>
    </alternativeName>
</protein>
<keyword id="KW-0968">Cytoplasmic vesicle</keyword>
<keyword id="KW-0333">Golgi apparatus</keyword>
<keyword id="KW-0406">Ion transport</keyword>
<keyword id="KW-0472">Membrane</keyword>
<keyword id="KW-0496">Mitochondrion</keyword>
<keyword id="KW-1185">Reference proteome</keyword>
<keyword id="KW-0703">Sarcoplasmic reticulum</keyword>
<keyword id="KW-0812">Transmembrane</keyword>
<keyword id="KW-1133">Transmembrane helix</keyword>
<keyword id="KW-0813">Transport</keyword>
<keyword id="KW-0862">Zinc</keyword>
<keyword id="KW-0864">Zinc transport</keyword>
<dbReference type="EMBL" id="CR760496">
    <property type="protein sequence ID" value="CAJ81402.1"/>
    <property type="molecule type" value="mRNA"/>
</dbReference>
<dbReference type="EMBL" id="BC063918">
    <property type="protein sequence ID" value="AAH63918.1"/>
    <property type="molecule type" value="mRNA"/>
</dbReference>
<dbReference type="RefSeq" id="NP_989256.1">
    <property type="nucleotide sequence ID" value="NM_203925.1"/>
</dbReference>
<dbReference type="SMR" id="Q6P3N9"/>
<dbReference type="FunCoup" id="Q6P3N9">
    <property type="interactions" value="2152"/>
</dbReference>
<dbReference type="STRING" id="8364.ENSXETP00000009180"/>
<dbReference type="PaxDb" id="8364-ENSXETP00000029015"/>
<dbReference type="DNASU" id="394867"/>
<dbReference type="GeneID" id="394867"/>
<dbReference type="KEGG" id="xtr:394867"/>
<dbReference type="AGR" id="Xenbase:XB-GENE-977014"/>
<dbReference type="CTD" id="148867"/>
<dbReference type="Xenbase" id="XB-GENE-977014">
    <property type="gene designation" value="slc30a7"/>
</dbReference>
<dbReference type="eggNOG" id="KOG1484">
    <property type="taxonomic scope" value="Eukaryota"/>
</dbReference>
<dbReference type="HOGENOM" id="CLU_013430_0_3_1"/>
<dbReference type="InParanoid" id="Q6P3N9"/>
<dbReference type="OMA" id="KWRANER"/>
<dbReference type="OrthoDB" id="78669at2759"/>
<dbReference type="PhylomeDB" id="Q6P3N9"/>
<dbReference type="TreeFam" id="TF315217"/>
<dbReference type="Proteomes" id="UP000008143">
    <property type="component" value="Chromosome 4"/>
</dbReference>
<dbReference type="Bgee" id="ENSXETG00000025164">
    <property type="expression patterns" value="Expressed in 4-cell stage embryo and 13 other cell types or tissues"/>
</dbReference>
<dbReference type="ExpressionAtlas" id="Q6P3N9">
    <property type="expression patterns" value="baseline"/>
</dbReference>
<dbReference type="GO" id="GO:0031410">
    <property type="term" value="C:cytoplasmic vesicle"/>
    <property type="evidence" value="ECO:0007669"/>
    <property type="project" value="UniProtKB-KW"/>
</dbReference>
<dbReference type="GO" id="GO:1990674">
    <property type="term" value="C:Golgi cis cisterna membrane"/>
    <property type="evidence" value="ECO:0000250"/>
    <property type="project" value="UniProtKB"/>
</dbReference>
<dbReference type="GO" id="GO:0000139">
    <property type="term" value="C:Golgi membrane"/>
    <property type="evidence" value="ECO:0007669"/>
    <property type="project" value="UniProtKB-SubCell"/>
</dbReference>
<dbReference type="GO" id="GO:0005739">
    <property type="term" value="C:mitochondrion"/>
    <property type="evidence" value="ECO:0000250"/>
    <property type="project" value="UniProtKB"/>
</dbReference>
<dbReference type="GO" id="GO:0033017">
    <property type="term" value="C:sarcoplasmic reticulum membrane"/>
    <property type="evidence" value="ECO:0000250"/>
    <property type="project" value="UniProtKB"/>
</dbReference>
<dbReference type="GO" id="GO:0005385">
    <property type="term" value="F:zinc ion transmembrane transporter activity"/>
    <property type="evidence" value="ECO:0000250"/>
    <property type="project" value="UniProtKB"/>
</dbReference>
<dbReference type="GO" id="GO:0006882">
    <property type="term" value="P:intracellular zinc ion homeostasis"/>
    <property type="evidence" value="ECO:0007669"/>
    <property type="project" value="InterPro"/>
</dbReference>
<dbReference type="GO" id="GO:1904257">
    <property type="term" value="P:zinc ion import into Golgi lumen"/>
    <property type="evidence" value="ECO:0000250"/>
    <property type="project" value="UniProtKB"/>
</dbReference>
<dbReference type="Gene3D" id="1.20.1510.10">
    <property type="entry name" value="Cation efflux protein transmembrane domain"/>
    <property type="match status" value="1"/>
</dbReference>
<dbReference type="InterPro" id="IPR002524">
    <property type="entry name" value="Cation_efflux"/>
</dbReference>
<dbReference type="InterPro" id="IPR027469">
    <property type="entry name" value="Cation_efflux_TMD_sf"/>
</dbReference>
<dbReference type="InterPro" id="IPR045316">
    <property type="entry name" value="Msc2-like"/>
</dbReference>
<dbReference type="NCBIfam" id="TIGR01297">
    <property type="entry name" value="CDF"/>
    <property type="match status" value="1"/>
</dbReference>
<dbReference type="PANTHER" id="PTHR45755">
    <property type="match status" value="1"/>
</dbReference>
<dbReference type="PANTHER" id="PTHR45755:SF4">
    <property type="entry name" value="ZINC TRANSPORTER 7"/>
    <property type="match status" value="1"/>
</dbReference>
<dbReference type="Pfam" id="PF01545">
    <property type="entry name" value="Cation_efflux"/>
    <property type="match status" value="1"/>
</dbReference>
<dbReference type="SUPFAM" id="SSF161111">
    <property type="entry name" value="Cation efflux protein transmembrane domain-like"/>
    <property type="match status" value="1"/>
</dbReference>
<name>ZNT7_XENTR</name>
<proteinExistence type="evidence at transcript level"/>
<comment type="function">
    <text evidence="2">Zinc ion transporter mediating zinc entry from the cytosol into the lumen of organelles along the secretory pathway. By contributing to zinc ion homeostasis within the early secretory pathway, regulates the activation and folding of enzymes like alkaline phosphatases.</text>
</comment>
<comment type="catalytic activity">
    <reaction evidence="2">
        <text>Zn(2+)(in) = Zn(2+)(out)</text>
        <dbReference type="Rhea" id="RHEA:29351"/>
        <dbReference type="ChEBI" id="CHEBI:29105"/>
    </reaction>
</comment>
<comment type="subunit">
    <text evidence="2">Homooligomer.</text>
</comment>
<comment type="subcellular location">
    <subcellularLocation>
        <location evidence="2">Golgi apparatus membrane</location>
        <topology evidence="4">Multi-pass membrane protein</topology>
    </subcellularLocation>
    <subcellularLocation>
        <location evidence="3">Cytoplasmic vesicle</location>
    </subcellularLocation>
    <subcellularLocation>
        <location evidence="3">Golgi apparatus</location>
        <location evidence="3">trans-Golgi network</location>
    </subcellularLocation>
    <subcellularLocation>
        <location evidence="1">Sarcoplasmic reticulum</location>
    </subcellularLocation>
    <subcellularLocation>
        <location evidence="1">Mitochondrion</location>
    </subcellularLocation>
</comment>
<comment type="similarity">
    <text evidence="6">Belongs to the cation diffusion facilitator (CDF) transporter (TC 2.A.4) family. SLC30A subfamily.</text>
</comment>
<evidence type="ECO:0000250" key="1">
    <source>
        <dbReference type="UniProtKB" id="Q5BJM8"/>
    </source>
</evidence>
<evidence type="ECO:0000250" key="2">
    <source>
        <dbReference type="UniProtKB" id="Q8NEW0"/>
    </source>
</evidence>
<evidence type="ECO:0000250" key="3">
    <source>
        <dbReference type="UniProtKB" id="Q9JKN1"/>
    </source>
</evidence>
<evidence type="ECO:0000255" key="4"/>
<evidence type="ECO:0000256" key="5">
    <source>
        <dbReference type="SAM" id="MobiDB-lite"/>
    </source>
</evidence>
<evidence type="ECO:0000305" key="6"/>